<keyword id="KW-1185">Reference proteome</keyword>
<keyword id="KW-0687">Ribonucleoprotein</keyword>
<keyword id="KW-0689">Ribosomal protein</keyword>
<keyword id="KW-0694">RNA-binding</keyword>
<keyword id="KW-0699">rRNA-binding</keyword>
<gene>
    <name evidence="1" type="primary">rpsE</name>
    <name type="ordered locus">RHE_CH01692</name>
</gene>
<organism>
    <name type="scientific">Rhizobium etli (strain ATCC 51251 / DSM 11541 / JCM 21823 / NBRC 15573 / CFN 42)</name>
    <dbReference type="NCBI Taxonomy" id="347834"/>
    <lineage>
        <taxon>Bacteria</taxon>
        <taxon>Pseudomonadati</taxon>
        <taxon>Pseudomonadota</taxon>
        <taxon>Alphaproteobacteria</taxon>
        <taxon>Hyphomicrobiales</taxon>
        <taxon>Rhizobiaceae</taxon>
        <taxon>Rhizobium/Agrobacterium group</taxon>
        <taxon>Rhizobium</taxon>
    </lineage>
</organism>
<accession>Q2K9J9</accession>
<feature type="chain" id="PRO_1000086043" description="Small ribosomal subunit protein uS5">
    <location>
        <begin position="1"/>
        <end position="189"/>
    </location>
</feature>
<feature type="domain" description="S5 DRBM" evidence="1">
    <location>
        <begin position="22"/>
        <end position="85"/>
    </location>
</feature>
<name>RS5_RHIEC</name>
<sequence length="189" mass="20695">MAQERRPQREDRQSREERDSEFVDKLVAINRVAKVVKGGRRFGFAALVVVGDQKGRVGFGHGKAREVPEAIRKATEAAKRELIFVPLRDGRTLHHDVHGRHGAGKVLLRSAKVGTGIIAGGPMRAVFETLGMHDVVAKSTGSSNPYNMVRATFDALKHQVHPKDIAAQRGIKYATLQARRSASGNASEE</sequence>
<comment type="function">
    <text evidence="1">With S4 and S12 plays an important role in translational accuracy.</text>
</comment>
<comment type="function">
    <text evidence="1">Located at the back of the 30S subunit body where it stabilizes the conformation of the head with respect to the body.</text>
</comment>
<comment type="subunit">
    <text evidence="1">Part of the 30S ribosomal subunit. Contacts proteins S4 and S8.</text>
</comment>
<comment type="domain">
    <text>The N-terminal domain interacts with the head of the 30S subunit; the C-terminal domain interacts with the body and contacts protein S4. The interaction surface between S4 and S5 is involved in control of translational fidelity.</text>
</comment>
<comment type="similarity">
    <text evidence="1">Belongs to the universal ribosomal protein uS5 family.</text>
</comment>
<dbReference type="EMBL" id="CP000133">
    <property type="protein sequence ID" value="ABC90487.1"/>
    <property type="molecule type" value="Genomic_DNA"/>
</dbReference>
<dbReference type="RefSeq" id="WP_003573784.1">
    <property type="nucleotide sequence ID" value="NC_007761.1"/>
</dbReference>
<dbReference type="SMR" id="Q2K9J9"/>
<dbReference type="GeneID" id="91148145"/>
<dbReference type="KEGG" id="ret:RHE_CH01692"/>
<dbReference type="eggNOG" id="COG0098">
    <property type="taxonomic scope" value="Bacteria"/>
</dbReference>
<dbReference type="HOGENOM" id="CLU_065898_2_2_5"/>
<dbReference type="OrthoDB" id="9809045at2"/>
<dbReference type="Proteomes" id="UP000001936">
    <property type="component" value="Chromosome"/>
</dbReference>
<dbReference type="GO" id="GO:0015935">
    <property type="term" value="C:small ribosomal subunit"/>
    <property type="evidence" value="ECO:0007669"/>
    <property type="project" value="InterPro"/>
</dbReference>
<dbReference type="GO" id="GO:0019843">
    <property type="term" value="F:rRNA binding"/>
    <property type="evidence" value="ECO:0007669"/>
    <property type="project" value="UniProtKB-UniRule"/>
</dbReference>
<dbReference type="GO" id="GO:0003735">
    <property type="term" value="F:structural constituent of ribosome"/>
    <property type="evidence" value="ECO:0007669"/>
    <property type="project" value="InterPro"/>
</dbReference>
<dbReference type="GO" id="GO:0006412">
    <property type="term" value="P:translation"/>
    <property type="evidence" value="ECO:0007669"/>
    <property type="project" value="UniProtKB-UniRule"/>
</dbReference>
<dbReference type="FunFam" id="3.30.160.20:FF:000001">
    <property type="entry name" value="30S ribosomal protein S5"/>
    <property type="match status" value="1"/>
</dbReference>
<dbReference type="FunFam" id="3.30.230.10:FF:000002">
    <property type="entry name" value="30S ribosomal protein S5"/>
    <property type="match status" value="1"/>
</dbReference>
<dbReference type="Gene3D" id="3.30.160.20">
    <property type="match status" value="1"/>
</dbReference>
<dbReference type="Gene3D" id="3.30.230.10">
    <property type="match status" value="1"/>
</dbReference>
<dbReference type="HAMAP" id="MF_01307_B">
    <property type="entry name" value="Ribosomal_uS5_B"/>
    <property type="match status" value="1"/>
</dbReference>
<dbReference type="InterPro" id="IPR020568">
    <property type="entry name" value="Ribosomal_Su5_D2-typ_SF"/>
</dbReference>
<dbReference type="InterPro" id="IPR000851">
    <property type="entry name" value="Ribosomal_uS5"/>
</dbReference>
<dbReference type="InterPro" id="IPR005712">
    <property type="entry name" value="Ribosomal_uS5_bac-type"/>
</dbReference>
<dbReference type="InterPro" id="IPR005324">
    <property type="entry name" value="Ribosomal_uS5_C"/>
</dbReference>
<dbReference type="InterPro" id="IPR013810">
    <property type="entry name" value="Ribosomal_uS5_N"/>
</dbReference>
<dbReference type="InterPro" id="IPR018192">
    <property type="entry name" value="Ribosomal_uS5_N_CS"/>
</dbReference>
<dbReference type="InterPro" id="IPR014721">
    <property type="entry name" value="Ribsml_uS5_D2-typ_fold_subgr"/>
</dbReference>
<dbReference type="NCBIfam" id="TIGR01021">
    <property type="entry name" value="rpsE_bact"/>
    <property type="match status" value="1"/>
</dbReference>
<dbReference type="PANTHER" id="PTHR48277">
    <property type="entry name" value="MITOCHONDRIAL RIBOSOMAL PROTEIN S5"/>
    <property type="match status" value="1"/>
</dbReference>
<dbReference type="PANTHER" id="PTHR48277:SF1">
    <property type="entry name" value="MITOCHONDRIAL RIBOSOMAL PROTEIN S5"/>
    <property type="match status" value="1"/>
</dbReference>
<dbReference type="Pfam" id="PF00333">
    <property type="entry name" value="Ribosomal_S5"/>
    <property type="match status" value="1"/>
</dbReference>
<dbReference type="Pfam" id="PF03719">
    <property type="entry name" value="Ribosomal_S5_C"/>
    <property type="match status" value="1"/>
</dbReference>
<dbReference type="SUPFAM" id="SSF54768">
    <property type="entry name" value="dsRNA-binding domain-like"/>
    <property type="match status" value="1"/>
</dbReference>
<dbReference type="SUPFAM" id="SSF54211">
    <property type="entry name" value="Ribosomal protein S5 domain 2-like"/>
    <property type="match status" value="1"/>
</dbReference>
<dbReference type="PROSITE" id="PS00585">
    <property type="entry name" value="RIBOSOMAL_S5"/>
    <property type="match status" value="1"/>
</dbReference>
<dbReference type="PROSITE" id="PS50881">
    <property type="entry name" value="S5_DSRBD"/>
    <property type="match status" value="1"/>
</dbReference>
<reference key="1">
    <citation type="journal article" date="2006" name="Proc. Natl. Acad. Sci. U.S.A.">
        <title>The partitioned Rhizobium etli genome: genetic and metabolic redundancy in seven interacting replicons.</title>
        <authorList>
            <person name="Gonzalez V."/>
            <person name="Santamaria R.I."/>
            <person name="Bustos P."/>
            <person name="Hernandez-Gonzalez I."/>
            <person name="Medrano-Soto A."/>
            <person name="Moreno-Hagelsieb G."/>
            <person name="Janga S.C."/>
            <person name="Ramirez M.A."/>
            <person name="Jimenez-Jacinto V."/>
            <person name="Collado-Vides J."/>
            <person name="Davila G."/>
        </authorList>
    </citation>
    <scope>NUCLEOTIDE SEQUENCE [LARGE SCALE GENOMIC DNA]</scope>
    <source>
        <strain>ATCC 51251 / DSM 11541 / JCM 21823 / NBRC 15573 / CFN 42</strain>
    </source>
</reference>
<protein>
    <recommendedName>
        <fullName evidence="1">Small ribosomal subunit protein uS5</fullName>
    </recommendedName>
    <alternativeName>
        <fullName evidence="2">30S ribosomal protein S5</fullName>
    </alternativeName>
</protein>
<evidence type="ECO:0000255" key="1">
    <source>
        <dbReference type="HAMAP-Rule" id="MF_01307"/>
    </source>
</evidence>
<evidence type="ECO:0000305" key="2"/>
<proteinExistence type="inferred from homology"/>